<dbReference type="EMBL" id="AF164575">
    <property type="protein sequence ID" value="AAG38955.1"/>
    <property type="molecule type" value="mRNA"/>
</dbReference>
<dbReference type="RefSeq" id="NP_776596.1">
    <property type="nucleotide sequence ID" value="NM_174171.2"/>
</dbReference>
<dbReference type="SMR" id="Q9GKN7"/>
<dbReference type="FunCoup" id="Q9GKN7">
    <property type="interactions" value="109"/>
</dbReference>
<dbReference type="STRING" id="9913.ENSBTAP00000015012"/>
<dbReference type="GlyCosmos" id="Q9GKN7">
    <property type="glycosylation" value="2 sites, No reported glycans"/>
</dbReference>
<dbReference type="GlyGen" id="Q9GKN7">
    <property type="glycosylation" value="2 sites"/>
</dbReference>
<dbReference type="PaxDb" id="9913-ENSBTAP00000015012"/>
<dbReference type="GeneID" id="281454"/>
<dbReference type="KEGG" id="bta:281454"/>
<dbReference type="CTD" id="6005"/>
<dbReference type="eggNOG" id="KOG3796">
    <property type="taxonomic scope" value="Eukaryota"/>
</dbReference>
<dbReference type="InParanoid" id="Q9GKN7"/>
<dbReference type="OrthoDB" id="534912at2759"/>
<dbReference type="Proteomes" id="UP000009136">
    <property type="component" value="Unplaced"/>
</dbReference>
<dbReference type="GO" id="GO:0016020">
    <property type="term" value="C:membrane"/>
    <property type="evidence" value="ECO:0000250"/>
    <property type="project" value="UniProtKB"/>
</dbReference>
<dbReference type="GO" id="GO:0005886">
    <property type="term" value="C:plasma membrane"/>
    <property type="evidence" value="ECO:0000250"/>
    <property type="project" value="UniProtKB"/>
</dbReference>
<dbReference type="GO" id="GO:0008519">
    <property type="term" value="F:ammonium channel activity"/>
    <property type="evidence" value="ECO:0000250"/>
    <property type="project" value="UniProtKB"/>
</dbReference>
<dbReference type="GO" id="GO:0035379">
    <property type="term" value="F:carbon dioxide transmembrane transporter activity"/>
    <property type="evidence" value="ECO:0000250"/>
    <property type="project" value="UniProtKB"/>
</dbReference>
<dbReference type="GO" id="GO:0022840">
    <property type="term" value="F:leak channel activity"/>
    <property type="evidence" value="ECO:0000250"/>
    <property type="project" value="UniProtKB"/>
</dbReference>
<dbReference type="GO" id="GO:0015200">
    <property type="term" value="F:methylammonium transmembrane transporter activity"/>
    <property type="evidence" value="ECO:0000250"/>
    <property type="project" value="UniProtKB"/>
</dbReference>
<dbReference type="GO" id="GO:0097272">
    <property type="term" value="P:ammonium homeostasis"/>
    <property type="evidence" value="ECO:0000318"/>
    <property type="project" value="GO_Central"/>
</dbReference>
<dbReference type="GO" id="GO:0072488">
    <property type="term" value="P:ammonium transmembrane transport"/>
    <property type="evidence" value="ECO:0000250"/>
    <property type="project" value="UniProtKB"/>
</dbReference>
<dbReference type="GO" id="GO:0035378">
    <property type="term" value="P:carbon dioxide transmembrane transport"/>
    <property type="evidence" value="ECO:0000250"/>
    <property type="project" value="UniProtKB"/>
</dbReference>
<dbReference type="GO" id="GO:0015670">
    <property type="term" value="P:carbon dioxide transport"/>
    <property type="evidence" value="ECO:0000250"/>
    <property type="project" value="UniProtKB"/>
</dbReference>
<dbReference type="GO" id="GO:0098662">
    <property type="term" value="P:inorganic cation transmembrane transport"/>
    <property type="evidence" value="ECO:0000250"/>
    <property type="project" value="UniProtKB"/>
</dbReference>
<dbReference type="GO" id="GO:0006873">
    <property type="term" value="P:intracellular monoatomic ion homeostasis"/>
    <property type="evidence" value="ECO:0000250"/>
    <property type="project" value="UniProtKB"/>
</dbReference>
<dbReference type="GO" id="GO:0072489">
    <property type="term" value="P:methylammonium transmembrane transport"/>
    <property type="evidence" value="ECO:0000250"/>
    <property type="project" value="UniProtKB"/>
</dbReference>
<dbReference type="FunFam" id="1.10.3430.10:FF:000001">
    <property type="entry name" value="Ammonium transporter Rh type C"/>
    <property type="match status" value="1"/>
</dbReference>
<dbReference type="Gene3D" id="1.10.3430.10">
    <property type="entry name" value="Ammonium transporter AmtB like domains"/>
    <property type="match status" value="1"/>
</dbReference>
<dbReference type="InterPro" id="IPR029020">
    <property type="entry name" value="Ammonium/urea_transptr"/>
</dbReference>
<dbReference type="InterPro" id="IPR024041">
    <property type="entry name" value="NH4_transpt_AmtB-like_dom"/>
</dbReference>
<dbReference type="InterPro" id="IPR002229">
    <property type="entry name" value="RhesusRHD"/>
</dbReference>
<dbReference type="PANTHER" id="PTHR11730">
    <property type="entry name" value="AMMONIUM TRANSPORTER"/>
    <property type="match status" value="1"/>
</dbReference>
<dbReference type="PANTHER" id="PTHR11730:SF32">
    <property type="entry name" value="AMMONIUM TRANSPORTER RH TYPE A"/>
    <property type="match status" value="1"/>
</dbReference>
<dbReference type="Pfam" id="PF00909">
    <property type="entry name" value="Ammonium_transp"/>
    <property type="match status" value="1"/>
</dbReference>
<dbReference type="PRINTS" id="PR00342">
    <property type="entry name" value="RHESUSRHD"/>
</dbReference>
<dbReference type="SUPFAM" id="SSF111352">
    <property type="entry name" value="Ammonium transporter"/>
    <property type="match status" value="1"/>
</dbReference>
<sequence>MRFKFPLMAIGLEVVMIVLFALFVQYETSVNTSRNPNETESAAMDVEKTMESYPFFQDVHIMVFAGFGFLMTFLWKYGFSGVGINLLIAALGLQWGTIIQGIFRSHGQKFLIEMKNMIHADFSTVTVLISFGAVLGKTSPVQMLIMTILEITVYAANEYLVFKILWASDTGESMTIHAFGAYFGLAVAGILYRSGLKEKHSNEESVYHSDLFAMIGSLFLWIFWPSFNSATADEAKKQYRAIVNTYFSLAASVVTAYACSSLLESRGKLNMVHIQNATLAGGVAVGTCADMEIPPYYAMIIGSIAGAVSVFGFKFLTPLFTTKLRIHDTCGVHNLHGLPGVIGGLAGIITVALEESDSTKTVSQAAALGSSIATALVGGLITGAILKIPFWAQPPDEDCYDDSVYWEVPERKEYDNHFHELLSTLH</sequence>
<feature type="chain" id="PRO_0000380192" description="Ammonium transporter Rh type A">
    <location>
        <begin position="1"/>
        <end position="426"/>
    </location>
</feature>
<feature type="topological domain" description="Cytoplasmic" evidence="2">
    <location>
        <begin position="1"/>
        <end position="4"/>
    </location>
</feature>
<feature type="transmembrane region" description="Helical" evidence="2">
    <location>
        <begin position="5"/>
        <end position="25"/>
    </location>
</feature>
<feature type="topological domain" description="Extracellular" evidence="2">
    <location>
        <begin position="26"/>
        <end position="54"/>
    </location>
</feature>
<feature type="transmembrane region" description="Helical" evidence="2">
    <location>
        <begin position="55"/>
        <end position="75"/>
    </location>
</feature>
<feature type="topological domain" description="Cytoplasmic" evidence="2">
    <location>
        <begin position="76"/>
        <end position="78"/>
    </location>
</feature>
<feature type="transmembrane region" description="Helical" evidence="2">
    <location>
        <begin position="79"/>
        <end position="99"/>
    </location>
</feature>
<feature type="topological domain" description="Extracellular" evidence="2">
    <location>
        <begin position="100"/>
        <end position="124"/>
    </location>
</feature>
<feature type="transmembrane region" description="Helical" evidence="2">
    <location>
        <begin position="125"/>
        <end position="145"/>
    </location>
</feature>
<feature type="transmembrane region" description="Helical" evidence="2">
    <location>
        <begin position="146"/>
        <end position="166"/>
    </location>
</feature>
<feature type="topological domain" description="Extracellular" evidence="2">
    <location>
        <begin position="167"/>
        <end position="170"/>
    </location>
</feature>
<feature type="transmembrane region" description="Helical" evidence="2">
    <location>
        <begin position="171"/>
        <end position="191"/>
    </location>
</feature>
<feature type="topological domain" description="Cytoplasmic" evidence="2">
    <location>
        <begin position="192"/>
        <end position="210"/>
    </location>
</feature>
<feature type="transmembrane region" description="Helical" evidence="2">
    <location>
        <begin position="211"/>
        <end position="231"/>
    </location>
</feature>
<feature type="topological domain" description="Extracellular" evidence="2">
    <location>
        <begin position="232"/>
        <end position="241"/>
    </location>
</feature>
<feature type="transmembrane region" description="Helical" evidence="2">
    <location>
        <begin position="242"/>
        <end position="262"/>
    </location>
</feature>
<feature type="topological domain" description="Cytoplasmic" evidence="2">
    <location>
        <begin position="263"/>
        <end position="270"/>
    </location>
</feature>
<feature type="transmembrane region" description="Helical" evidence="2">
    <location>
        <begin position="271"/>
        <end position="288"/>
    </location>
</feature>
<feature type="topological domain" description="Extracellular" evidence="2">
    <location>
        <begin position="289"/>
        <end position="292"/>
    </location>
</feature>
<feature type="transmembrane region" description="Helical" evidence="2">
    <location>
        <begin position="293"/>
        <end position="313"/>
    </location>
</feature>
<feature type="topological domain" description="Cytoplasmic" evidence="2">
    <location>
        <begin position="314"/>
        <end position="331"/>
    </location>
</feature>
<feature type="transmembrane region" description="Helical" evidence="2">
    <location>
        <begin position="332"/>
        <end position="352"/>
    </location>
</feature>
<feature type="topological domain" description="Extracellular" evidence="2">
    <location>
        <begin position="353"/>
        <end position="371"/>
    </location>
</feature>
<feature type="transmembrane region" description="Helical" evidence="2">
    <location>
        <begin position="372"/>
        <end position="392"/>
    </location>
</feature>
<feature type="topological domain" description="Cytoplasmic" evidence="2">
    <location>
        <begin position="393"/>
        <end position="426"/>
    </location>
</feature>
<feature type="glycosylation site" description="N-linked (GlcNAc...) asparagine" evidence="2">
    <location>
        <position position="31"/>
    </location>
</feature>
<feature type="glycosylation site" description="N-linked (GlcNAc...) asparagine" evidence="2">
    <location>
        <position position="37"/>
    </location>
</feature>
<comment type="function">
    <text evidence="1">Component of the ankyrin-1 complex, a multiprotein complex involved in the stability and shape of the erythrocyte membrane. Heterotrimer with RHCE (RHAG)2(RHCE), that transports ammonium and its related derivative methylammonium, in both neutral and ionic forms, across the erythrocyte membrane. The transport of NH4(+) is electrogenic and masks the NH3 transport. Also, may act as a CO2 channel. Moreover in erythrocyte, regulates RHD membrane expression and is associated with rhesus blood group antigen expression.</text>
</comment>
<comment type="catalytic activity">
    <reaction evidence="1">
        <text>methylamine(out) = methylamine(in)</text>
        <dbReference type="Rhea" id="RHEA:74391"/>
        <dbReference type="ChEBI" id="CHEBI:59338"/>
    </reaction>
</comment>
<comment type="catalytic activity">
    <reaction evidence="1">
        <text>NH4(+)(in) = NH4(+)(out)</text>
        <dbReference type="Rhea" id="RHEA:28747"/>
        <dbReference type="ChEBI" id="CHEBI:28938"/>
    </reaction>
</comment>
<comment type="catalytic activity">
    <reaction evidence="1">
        <text>CO2(out) = CO2(in)</text>
        <dbReference type="Rhea" id="RHEA:74891"/>
        <dbReference type="ChEBI" id="CHEBI:16526"/>
    </reaction>
</comment>
<comment type="subunit">
    <text evidence="1">Homodimer. Heterotrimer; a RHCE monomer interacts with a RHAG homodimer. Component of the ankyrin-1 complex in the erythrocyte, composed of ANK1, RHCE, RHAG, SLC4A1, EPB42, GYPA, GYPB and AQP1. Interacts with GYPB (via the N-terminal); this interaction bridges the (RHAG)2(RHCE) heterotrimer with the SLC4A1 Band 3 I dimer complexed with GYPA.</text>
</comment>
<comment type="subcellular location">
    <subcellularLocation>
        <location evidence="1">Membrane</location>
        <topology evidence="1">Multi-pass membrane protein</topology>
    </subcellularLocation>
    <text evidence="1">Localization at the plasma membrane is regulated by ANK1.</text>
</comment>
<comment type="PTM">
    <text evidence="1">Glycosylated.</text>
</comment>
<comment type="similarity">
    <text evidence="3">Belongs to the ammonium transporter (TC 2.A.49) family. Rh subfamily.</text>
</comment>
<accession>Q9GKN7</accession>
<protein>
    <recommendedName>
        <fullName evidence="1">Ammonium transporter Rh type A</fullName>
    </recommendedName>
    <alternativeName>
        <fullName>Erythrocyte membrane glycoprotein Rh50</fullName>
    </alternativeName>
    <alternativeName>
        <fullName>Rhesus blood group family type A glycoprotein</fullName>
        <shortName>Rh family type A glycoprotein</shortName>
        <shortName>Rh type A glycoprotein</shortName>
    </alternativeName>
    <cdAntigenName>CD241</cdAntigenName>
</protein>
<proteinExistence type="evidence at transcript level"/>
<keyword id="KW-0924">Ammonia transport</keyword>
<keyword id="KW-0325">Glycoprotein</keyword>
<keyword id="KW-0472">Membrane</keyword>
<keyword id="KW-1185">Reference proteome</keyword>
<keyword id="KW-0812">Transmembrane</keyword>
<keyword id="KW-1133">Transmembrane helix</keyword>
<keyword id="KW-0813">Transport</keyword>
<organism>
    <name type="scientific">Bos taurus</name>
    <name type="common">Bovine</name>
    <dbReference type="NCBI Taxonomy" id="9913"/>
    <lineage>
        <taxon>Eukaryota</taxon>
        <taxon>Metazoa</taxon>
        <taxon>Chordata</taxon>
        <taxon>Craniata</taxon>
        <taxon>Vertebrata</taxon>
        <taxon>Euteleostomi</taxon>
        <taxon>Mammalia</taxon>
        <taxon>Eutheria</taxon>
        <taxon>Laurasiatheria</taxon>
        <taxon>Artiodactyla</taxon>
        <taxon>Ruminantia</taxon>
        <taxon>Pecora</taxon>
        <taxon>Bovidae</taxon>
        <taxon>Bovinae</taxon>
        <taxon>Bos</taxon>
    </lineage>
</organism>
<reference key="1">
    <citation type="submission" date="1999-07" db="EMBL/GenBank/DDBJ databases">
        <title>Evolution of RH50 genes in Metazoa.</title>
        <authorList>
            <person name="Cherif-Zahar B."/>
            <person name="Raynal V."/>
            <person name="Cartron J.-P."/>
            <person name="Matassi G."/>
        </authorList>
    </citation>
    <scope>NUCLEOTIDE SEQUENCE [MRNA]</scope>
</reference>
<evidence type="ECO:0000250" key="1">
    <source>
        <dbReference type="UniProtKB" id="Q02094"/>
    </source>
</evidence>
<evidence type="ECO:0000255" key="2"/>
<evidence type="ECO:0000305" key="3"/>
<gene>
    <name evidence="1" type="primary">RHAG</name>
    <name type="synonym">RH50</name>
</gene>
<name>RHAG_BOVIN</name>